<dbReference type="EC" id="6.1.1.4" evidence="1"/>
<dbReference type="EMBL" id="AE001363">
    <property type="protein sequence ID" value="AAD18306.1"/>
    <property type="molecule type" value="Genomic_DNA"/>
</dbReference>
<dbReference type="EMBL" id="AE002161">
    <property type="protein sequence ID" value="AAF38433.1"/>
    <property type="molecule type" value="Genomic_DNA"/>
</dbReference>
<dbReference type="EMBL" id="BA000008">
    <property type="protein sequence ID" value="BAA98363.1"/>
    <property type="molecule type" value="Genomic_DNA"/>
</dbReference>
<dbReference type="EMBL" id="AE009440">
    <property type="protein sequence ID" value="AAP98087.1"/>
    <property type="molecule type" value="Genomic_DNA"/>
</dbReference>
<dbReference type="PIR" id="A86510">
    <property type="entry name" value="A86510"/>
</dbReference>
<dbReference type="PIR" id="C72113">
    <property type="entry name" value="C72113"/>
</dbReference>
<dbReference type="RefSeq" id="NP_224361.1">
    <property type="nucleotide sequence ID" value="NC_000922.1"/>
</dbReference>
<dbReference type="RefSeq" id="WP_010882803.1">
    <property type="nucleotide sequence ID" value="NZ_LN847257.1"/>
</dbReference>
<dbReference type="SMR" id="Q9Z930"/>
<dbReference type="STRING" id="406984.CPK_ORF00669"/>
<dbReference type="GeneID" id="45050198"/>
<dbReference type="KEGG" id="cpa:CP_0618"/>
<dbReference type="KEGG" id="cpj:leuS"/>
<dbReference type="KEGG" id="cpn:CPn_0153"/>
<dbReference type="KEGG" id="cpt:CpB0154"/>
<dbReference type="PATRIC" id="fig|115713.3.peg.175"/>
<dbReference type="eggNOG" id="COG0495">
    <property type="taxonomic scope" value="Bacteria"/>
</dbReference>
<dbReference type="HOGENOM" id="CLU_004427_0_0_0"/>
<dbReference type="OrthoDB" id="9810365at2"/>
<dbReference type="Proteomes" id="UP000000583">
    <property type="component" value="Chromosome"/>
</dbReference>
<dbReference type="Proteomes" id="UP000000801">
    <property type="component" value="Chromosome"/>
</dbReference>
<dbReference type="GO" id="GO:0005829">
    <property type="term" value="C:cytosol"/>
    <property type="evidence" value="ECO:0007669"/>
    <property type="project" value="TreeGrafter"/>
</dbReference>
<dbReference type="GO" id="GO:0002161">
    <property type="term" value="F:aminoacyl-tRNA deacylase activity"/>
    <property type="evidence" value="ECO:0007669"/>
    <property type="project" value="InterPro"/>
</dbReference>
<dbReference type="GO" id="GO:0005524">
    <property type="term" value="F:ATP binding"/>
    <property type="evidence" value="ECO:0007669"/>
    <property type="project" value="UniProtKB-UniRule"/>
</dbReference>
<dbReference type="GO" id="GO:0004823">
    <property type="term" value="F:leucine-tRNA ligase activity"/>
    <property type="evidence" value="ECO:0007669"/>
    <property type="project" value="UniProtKB-UniRule"/>
</dbReference>
<dbReference type="GO" id="GO:0006429">
    <property type="term" value="P:leucyl-tRNA aminoacylation"/>
    <property type="evidence" value="ECO:0007669"/>
    <property type="project" value="UniProtKB-UniRule"/>
</dbReference>
<dbReference type="CDD" id="cd07958">
    <property type="entry name" value="Anticodon_Ia_Leu_BEm"/>
    <property type="match status" value="1"/>
</dbReference>
<dbReference type="CDD" id="cd00812">
    <property type="entry name" value="LeuRS_core"/>
    <property type="match status" value="1"/>
</dbReference>
<dbReference type="FunFam" id="1.10.730.10:FF:000002">
    <property type="entry name" value="Leucine--tRNA ligase"/>
    <property type="match status" value="1"/>
</dbReference>
<dbReference type="FunFam" id="3.40.50.620:FF:000056">
    <property type="entry name" value="Leucine--tRNA ligase"/>
    <property type="match status" value="1"/>
</dbReference>
<dbReference type="FunFam" id="3.40.50.620:FF:000077">
    <property type="entry name" value="Leucine--tRNA ligase"/>
    <property type="match status" value="1"/>
</dbReference>
<dbReference type="Gene3D" id="3.40.50.620">
    <property type="entry name" value="HUPs"/>
    <property type="match status" value="2"/>
</dbReference>
<dbReference type="Gene3D" id="1.10.730.10">
    <property type="entry name" value="Isoleucyl-tRNA Synthetase, Domain 1"/>
    <property type="match status" value="1"/>
</dbReference>
<dbReference type="Gene3D" id="3.90.740.10">
    <property type="entry name" value="Valyl/Leucyl/Isoleucyl-tRNA synthetase, editing domain"/>
    <property type="match status" value="1"/>
</dbReference>
<dbReference type="HAMAP" id="MF_00049_B">
    <property type="entry name" value="Leu_tRNA_synth_B"/>
    <property type="match status" value="1"/>
</dbReference>
<dbReference type="InterPro" id="IPR001412">
    <property type="entry name" value="aa-tRNA-synth_I_CS"/>
</dbReference>
<dbReference type="InterPro" id="IPR002300">
    <property type="entry name" value="aa-tRNA-synth_Ia"/>
</dbReference>
<dbReference type="InterPro" id="IPR002302">
    <property type="entry name" value="Leu-tRNA-ligase"/>
</dbReference>
<dbReference type="InterPro" id="IPR025709">
    <property type="entry name" value="Leu_tRNA-synth_edit"/>
</dbReference>
<dbReference type="InterPro" id="IPR013155">
    <property type="entry name" value="M/V/L/I-tRNA-synth_anticd-bd"/>
</dbReference>
<dbReference type="InterPro" id="IPR015413">
    <property type="entry name" value="Methionyl/Leucyl_tRNA_Synth"/>
</dbReference>
<dbReference type="InterPro" id="IPR014729">
    <property type="entry name" value="Rossmann-like_a/b/a_fold"/>
</dbReference>
<dbReference type="InterPro" id="IPR009080">
    <property type="entry name" value="tRNAsynth_Ia_anticodon-bd"/>
</dbReference>
<dbReference type="InterPro" id="IPR009008">
    <property type="entry name" value="Val/Leu/Ile-tRNA-synth_edit"/>
</dbReference>
<dbReference type="NCBIfam" id="TIGR00396">
    <property type="entry name" value="leuS_bact"/>
    <property type="match status" value="1"/>
</dbReference>
<dbReference type="PANTHER" id="PTHR43740:SF2">
    <property type="entry name" value="LEUCINE--TRNA LIGASE, MITOCHONDRIAL"/>
    <property type="match status" value="1"/>
</dbReference>
<dbReference type="PANTHER" id="PTHR43740">
    <property type="entry name" value="LEUCYL-TRNA SYNTHETASE"/>
    <property type="match status" value="1"/>
</dbReference>
<dbReference type="Pfam" id="PF08264">
    <property type="entry name" value="Anticodon_1"/>
    <property type="match status" value="1"/>
</dbReference>
<dbReference type="Pfam" id="PF00133">
    <property type="entry name" value="tRNA-synt_1"/>
    <property type="match status" value="1"/>
</dbReference>
<dbReference type="Pfam" id="PF13603">
    <property type="entry name" value="tRNA-synt_1_2"/>
    <property type="match status" value="1"/>
</dbReference>
<dbReference type="Pfam" id="PF09334">
    <property type="entry name" value="tRNA-synt_1g"/>
    <property type="match status" value="1"/>
</dbReference>
<dbReference type="PRINTS" id="PR00985">
    <property type="entry name" value="TRNASYNTHLEU"/>
</dbReference>
<dbReference type="SUPFAM" id="SSF47323">
    <property type="entry name" value="Anticodon-binding domain of a subclass of class I aminoacyl-tRNA synthetases"/>
    <property type="match status" value="1"/>
</dbReference>
<dbReference type="SUPFAM" id="SSF52374">
    <property type="entry name" value="Nucleotidylyl transferase"/>
    <property type="match status" value="1"/>
</dbReference>
<dbReference type="SUPFAM" id="SSF50677">
    <property type="entry name" value="ValRS/IleRS/LeuRS editing domain"/>
    <property type="match status" value="1"/>
</dbReference>
<dbReference type="PROSITE" id="PS00178">
    <property type="entry name" value="AA_TRNA_LIGASE_I"/>
    <property type="match status" value="1"/>
</dbReference>
<proteinExistence type="inferred from homology"/>
<protein>
    <recommendedName>
        <fullName evidence="1">Leucine--tRNA ligase</fullName>
        <ecNumber evidence="1">6.1.1.4</ecNumber>
    </recommendedName>
    <alternativeName>
        <fullName evidence="1">Leucyl-tRNA synthetase</fullName>
        <shortName evidence="1">LeuRS</shortName>
    </alternativeName>
</protein>
<comment type="catalytic activity">
    <reaction evidence="1">
        <text>tRNA(Leu) + L-leucine + ATP = L-leucyl-tRNA(Leu) + AMP + diphosphate</text>
        <dbReference type="Rhea" id="RHEA:11688"/>
        <dbReference type="Rhea" id="RHEA-COMP:9613"/>
        <dbReference type="Rhea" id="RHEA-COMP:9622"/>
        <dbReference type="ChEBI" id="CHEBI:30616"/>
        <dbReference type="ChEBI" id="CHEBI:33019"/>
        <dbReference type="ChEBI" id="CHEBI:57427"/>
        <dbReference type="ChEBI" id="CHEBI:78442"/>
        <dbReference type="ChEBI" id="CHEBI:78494"/>
        <dbReference type="ChEBI" id="CHEBI:456215"/>
        <dbReference type="EC" id="6.1.1.4"/>
    </reaction>
</comment>
<comment type="subcellular location">
    <subcellularLocation>
        <location evidence="1">Cytoplasm</location>
    </subcellularLocation>
</comment>
<comment type="similarity">
    <text evidence="1">Belongs to the class-I aminoacyl-tRNA synthetase family.</text>
</comment>
<reference key="1">
    <citation type="journal article" date="1999" name="Nat. Genet.">
        <title>Comparative genomes of Chlamydia pneumoniae and C. trachomatis.</title>
        <authorList>
            <person name="Kalman S."/>
            <person name="Mitchell W.P."/>
            <person name="Marathe R."/>
            <person name="Lammel C.J."/>
            <person name="Fan J."/>
            <person name="Hyman R.W."/>
            <person name="Olinger L."/>
            <person name="Grimwood J."/>
            <person name="Davis R.W."/>
            <person name="Stephens R.S."/>
        </authorList>
    </citation>
    <scope>NUCLEOTIDE SEQUENCE [LARGE SCALE GENOMIC DNA]</scope>
    <source>
        <strain>CWL029</strain>
    </source>
</reference>
<reference key="2">
    <citation type="journal article" date="2000" name="Nucleic Acids Res.">
        <title>Genome sequences of Chlamydia trachomatis MoPn and Chlamydia pneumoniae AR39.</title>
        <authorList>
            <person name="Read T.D."/>
            <person name="Brunham R.C."/>
            <person name="Shen C."/>
            <person name="Gill S.R."/>
            <person name="Heidelberg J.F."/>
            <person name="White O."/>
            <person name="Hickey E.K."/>
            <person name="Peterson J.D."/>
            <person name="Utterback T.R."/>
            <person name="Berry K.J."/>
            <person name="Bass S."/>
            <person name="Linher K.D."/>
            <person name="Weidman J.F."/>
            <person name="Khouri H.M."/>
            <person name="Craven B."/>
            <person name="Bowman C."/>
            <person name="Dodson R.J."/>
            <person name="Gwinn M.L."/>
            <person name="Nelson W.C."/>
            <person name="DeBoy R.T."/>
            <person name="Kolonay J.F."/>
            <person name="McClarty G."/>
            <person name="Salzberg S.L."/>
            <person name="Eisen J.A."/>
            <person name="Fraser C.M."/>
        </authorList>
    </citation>
    <scope>NUCLEOTIDE SEQUENCE [LARGE SCALE GENOMIC DNA]</scope>
    <source>
        <strain>AR39</strain>
    </source>
</reference>
<reference key="3">
    <citation type="journal article" date="2000" name="Nucleic Acids Res.">
        <title>Comparison of whole genome sequences of Chlamydia pneumoniae J138 from Japan and CWL029 from USA.</title>
        <authorList>
            <person name="Shirai M."/>
            <person name="Hirakawa H."/>
            <person name="Kimoto M."/>
            <person name="Tabuchi M."/>
            <person name="Kishi F."/>
            <person name="Ouchi K."/>
            <person name="Shiba T."/>
            <person name="Ishii K."/>
            <person name="Hattori M."/>
            <person name="Kuhara S."/>
            <person name="Nakazawa T."/>
        </authorList>
    </citation>
    <scope>NUCLEOTIDE SEQUENCE [LARGE SCALE GENOMIC DNA]</scope>
    <source>
        <strain>J138</strain>
    </source>
</reference>
<reference key="4">
    <citation type="submission" date="2002-05" db="EMBL/GenBank/DDBJ databases">
        <title>The genome sequence of Chlamydia pneumoniae TW183 and comparison with other Chlamydia strains based on whole genome sequence analysis.</title>
        <authorList>
            <person name="Geng M.M."/>
            <person name="Schuhmacher A."/>
            <person name="Muehldorfer I."/>
            <person name="Bensch K.W."/>
            <person name="Schaefer K.P."/>
            <person name="Schneider S."/>
            <person name="Pohl T."/>
            <person name="Essig A."/>
            <person name="Marre R."/>
            <person name="Melchers K."/>
        </authorList>
    </citation>
    <scope>NUCLEOTIDE SEQUENCE [LARGE SCALE GENOMIC DNA]</scope>
    <source>
        <strain>TW-183</strain>
    </source>
</reference>
<sequence length="820" mass="93966">MRYDPNLIEKKWQQFWKEHRSFQANEDEDKVKYYVLDMFPYPSGAGLHVGHLIGYTATDIVARYKRARGFSVLHPMGWDSFGLPAEQYAIRTGTHPKVTTQKNIANFKKQLSAMGFSYDEGREFATSDPDYYHWTQKLFLFLYDQGLAYMADMAVNYCPELGTVLSNEEVENGFSIEGGYPVERKMLRQWILKITAYADKLLEGLDALDWPENVKQLQKNWIGKSEGALVTFHLTQEGSLEAFTTRLDTLLGVSFLVIAPEHPDLDSIVSEEQRDEVTAYVQESLRKSERDRISSVKTKTGVFTGNYAKHPITGNLLPVWISDYVVLGYGTGVVMGVPAHDERDREFAEMFSLPIHEVIDDNGVCIHSNYNDFCLNGLSGQEAKDYVINYLEMRSLGRAKTMYRLRDWLFSRQRYWGEPIPIIHFEDGTHRPLEDDELPLLPPNIDDYRPEGFGQGPLAKAQDWVHIYDEKTGRPGCRETYTMPQWAGSCWYYLRFCDAHNSQLPWSKEKESYWMPVDLYIGGAEHAVLHLLYSRFWHRVFYDAGLVSTPEPFKKLINQGLVLASSYRIPGKGYVSIEDVREENGTWISTCGEIVEVRQEKMSKSKLNGVDPQVLIEEYGADALRMYAMFSGPLDKNKTWSNEGVGGCRRFLNRFYDLVTSSEVQDIEDRDGLVLAHKLVFRITEHIEKMSLNTIPSSFMEFLNDFSKLPVYSKRALSMAVRVLEPIAPHISEELWVILGNPPGIDQAAWPQIDESYLVAQTVTFVVQVNGKLRGRLEVAKEAPKEEVLSLSRSVVAKYLENAQIRKEIYVPNKLVNFVL</sequence>
<organism>
    <name type="scientific">Chlamydia pneumoniae</name>
    <name type="common">Chlamydophila pneumoniae</name>
    <dbReference type="NCBI Taxonomy" id="83558"/>
    <lineage>
        <taxon>Bacteria</taxon>
        <taxon>Pseudomonadati</taxon>
        <taxon>Chlamydiota</taxon>
        <taxon>Chlamydiia</taxon>
        <taxon>Chlamydiales</taxon>
        <taxon>Chlamydiaceae</taxon>
        <taxon>Chlamydia/Chlamydophila group</taxon>
        <taxon>Chlamydia</taxon>
    </lineage>
</organism>
<feature type="chain" id="PRO_0000151998" description="Leucine--tRNA ligase">
    <location>
        <begin position="1"/>
        <end position="820"/>
    </location>
</feature>
<feature type="short sequence motif" description="'HIGH' region">
    <location>
        <begin position="40"/>
        <end position="51"/>
    </location>
</feature>
<feature type="short sequence motif" description="'KMSKS' region">
    <location>
        <begin position="601"/>
        <end position="605"/>
    </location>
</feature>
<feature type="binding site" evidence="1">
    <location>
        <position position="604"/>
    </location>
    <ligand>
        <name>ATP</name>
        <dbReference type="ChEBI" id="CHEBI:30616"/>
    </ligand>
</feature>
<accession>Q9Z930</accession>
<accession>Q9JQ86</accession>
<evidence type="ECO:0000255" key="1">
    <source>
        <dbReference type="HAMAP-Rule" id="MF_00049"/>
    </source>
</evidence>
<gene>
    <name evidence="1" type="primary">leuS</name>
    <name type="ordered locus">CPn_0153</name>
    <name type="ordered locus">CP_0618</name>
    <name type="ordered locus">CpB0154</name>
</gene>
<name>SYL_CHLPN</name>
<keyword id="KW-0030">Aminoacyl-tRNA synthetase</keyword>
<keyword id="KW-0067">ATP-binding</keyword>
<keyword id="KW-0963">Cytoplasm</keyword>
<keyword id="KW-0436">Ligase</keyword>
<keyword id="KW-0547">Nucleotide-binding</keyword>
<keyword id="KW-0648">Protein biosynthesis</keyword>